<name>RS2_STRA3</name>
<reference key="1">
    <citation type="journal article" date="2002" name="Mol. Microbiol.">
        <title>Genome sequence of Streptococcus agalactiae, a pathogen causing invasive neonatal disease.</title>
        <authorList>
            <person name="Glaser P."/>
            <person name="Rusniok C."/>
            <person name="Buchrieser C."/>
            <person name="Chevalier F."/>
            <person name="Frangeul L."/>
            <person name="Msadek T."/>
            <person name="Zouine M."/>
            <person name="Couve E."/>
            <person name="Lalioui L."/>
            <person name="Poyart C."/>
            <person name="Trieu-Cuot P."/>
            <person name="Kunst F."/>
        </authorList>
    </citation>
    <scope>NUCLEOTIDE SEQUENCE [LARGE SCALE GENOMIC DNA]</scope>
    <source>
        <strain>NEM316</strain>
    </source>
</reference>
<proteinExistence type="inferred from homology"/>
<feature type="chain" id="PRO_0000134246" description="Small ribosomal subunit protein uS2">
    <location>
        <begin position="1"/>
        <end position="256"/>
    </location>
</feature>
<dbReference type="EMBL" id="AL766854">
    <property type="protein sequence ID" value="CAD47532.1"/>
    <property type="molecule type" value="Genomic_DNA"/>
</dbReference>
<dbReference type="RefSeq" id="WP_000268454.1">
    <property type="nucleotide sequence ID" value="NC_004368.1"/>
</dbReference>
<dbReference type="SMR" id="Q8E388"/>
<dbReference type="GeneID" id="66886669"/>
<dbReference type="KEGG" id="san:rpsB"/>
<dbReference type="eggNOG" id="COG0052">
    <property type="taxonomic scope" value="Bacteria"/>
</dbReference>
<dbReference type="HOGENOM" id="CLU_040318_1_2_9"/>
<dbReference type="Proteomes" id="UP000000823">
    <property type="component" value="Chromosome"/>
</dbReference>
<dbReference type="GO" id="GO:0022627">
    <property type="term" value="C:cytosolic small ribosomal subunit"/>
    <property type="evidence" value="ECO:0007669"/>
    <property type="project" value="TreeGrafter"/>
</dbReference>
<dbReference type="GO" id="GO:0003735">
    <property type="term" value="F:structural constituent of ribosome"/>
    <property type="evidence" value="ECO:0007669"/>
    <property type="project" value="InterPro"/>
</dbReference>
<dbReference type="GO" id="GO:0006412">
    <property type="term" value="P:translation"/>
    <property type="evidence" value="ECO:0007669"/>
    <property type="project" value="UniProtKB-UniRule"/>
</dbReference>
<dbReference type="CDD" id="cd01425">
    <property type="entry name" value="RPS2"/>
    <property type="match status" value="1"/>
</dbReference>
<dbReference type="FunFam" id="1.10.287.610:FF:000001">
    <property type="entry name" value="30S ribosomal protein S2"/>
    <property type="match status" value="1"/>
</dbReference>
<dbReference type="Gene3D" id="3.40.50.10490">
    <property type="entry name" value="Glucose-6-phosphate isomerase like protein, domain 1"/>
    <property type="match status" value="1"/>
</dbReference>
<dbReference type="Gene3D" id="1.10.287.610">
    <property type="entry name" value="Helix hairpin bin"/>
    <property type="match status" value="1"/>
</dbReference>
<dbReference type="HAMAP" id="MF_00291_B">
    <property type="entry name" value="Ribosomal_uS2_B"/>
    <property type="match status" value="1"/>
</dbReference>
<dbReference type="InterPro" id="IPR001865">
    <property type="entry name" value="Ribosomal_uS2"/>
</dbReference>
<dbReference type="InterPro" id="IPR005706">
    <property type="entry name" value="Ribosomal_uS2_bac/mit/plastid"/>
</dbReference>
<dbReference type="InterPro" id="IPR018130">
    <property type="entry name" value="Ribosomal_uS2_CS"/>
</dbReference>
<dbReference type="InterPro" id="IPR023591">
    <property type="entry name" value="Ribosomal_uS2_flav_dom_sf"/>
</dbReference>
<dbReference type="NCBIfam" id="TIGR01011">
    <property type="entry name" value="rpsB_bact"/>
    <property type="match status" value="1"/>
</dbReference>
<dbReference type="PANTHER" id="PTHR12534">
    <property type="entry name" value="30S RIBOSOMAL PROTEIN S2 PROKARYOTIC AND ORGANELLAR"/>
    <property type="match status" value="1"/>
</dbReference>
<dbReference type="PANTHER" id="PTHR12534:SF0">
    <property type="entry name" value="SMALL RIBOSOMAL SUBUNIT PROTEIN US2M"/>
    <property type="match status" value="1"/>
</dbReference>
<dbReference type="Pfam" id="PF00318">
    <property type="entry name" value="Ribosomal_S2"/>
    <property type="match status" value="1"/>
</dbReference>
<dbReference type="PRINTS" id="PR00395">
    <property type="entry name" value="RIBOSOMALS2"/>
</dbReference>
<dbReference type="SUPFAM" id="SSF52313">
    <property type="entry name" value="Ribosomal protein S2"/>
    <property type="match status" value="1"/>
</dbReference>
<dbReference type="PROSITE" id="PS00962">
    <property type="entry name" value="RIBOSOMAL_S2_1"/>
    <property type="match status" value="1"/>
</dbReference>
<gene>
    <name evidence="1" type="primary">rpsB</name>
    <name type="ordered locus">gbs1873</name>
</gene>
<sequence>MAVISMKQLLEAGVHFGHQTRRWNPKMAKYIFTERNGIHVIDLQQTVKLADQAYEFVRDAAANDAVILFVGTKKQAAEAVAEEAKRAGQYFINHRWLGGTLTNWGTIQKRIARLKEIKRMEEEGTFELLPKKEVALLNKQRARLEKFLGGIEDMPRIPDVMYVVDPHKEQIAVKEAKKLGIPVVAMVDTNADPDDIDVIIPANDDAIRAVKLITSKLADAVIEGRQGEDADVDFAQEAQADSIEEIVEVVEGSNND</sequence>
<protein>
    <recommendedName>
        <fullName evidence="1">Small ribosomal subunit protein uS2</fullName>
    </recommendedName>
    <alternativeName>
        <fullName evidence="2">30S ribosomal protein S2</fullName>
    </alternativeName>
</protein>
<keyword id="KW-0687">Ribonucleoprotein</keyword>
<keyword id="KW-0689">Ribosomal protein</keyword>
<evidence type="ECO:0000255" key="1">
    <source>
        <dbReference type="HAMAP-Rule" id="MF_00291"/>
    </source>
</evidence>
<evidence type="ECO:0000305" key="2"/>
<comment type="similarity">
    <text evidence="1">Belongs to the universal ribosomal protein uS2 family.</text>
</comment>
<accession>Q8E388</accession>
<organism>
    <name type="scientific">Streptococcus agalactiae serotype III (strain NEM316)</name>
    <dbReference type="NCBI Taxonomy" id="211110"/>
    <lineage>
        <taxon>Bacteria</taxon>
        <taxon>Bacillati</taxon>
        <taxon>Bacillota</taxon>
        <taxon>Bacilli</taxon>
        <taxon>Lactobacillales</taxon>
        <taxon>Streptococcaceae</taxon>
        <taxon>Streptococcus</taxon>
    </lineage>
</organism>